<organism>
    <name type="scientific">Saccharum hybrid</name>
    <name type="common">Sugarcane</name>
    <dbReference type="NCBI Taxonomy" id="15819"/>
    <lineage>
        <taxon>Eukaryota</taxon>
        <taxon>Viridiplantae</taxon>
        <taxon>Streptophyta</taxon>
        <taxon>Embryophyta</taxon>
        <taxon>Tracheophyta</taxon>
        <taxon>Spermatophyta</taxon>
        <taxon>Magnoliopsida</taxon>
        <taxon>Liliopsida</taxon>
        <taxon>Poales</taxon>
        <taxon>Poaceae</taxon>
        <taxon>PACMAD clade</taxon>
        <taxon>Panicoideae</taxon>
        <taxon>Andropogonodae</taxon>
        <taxon>Andropogoneae</taxon>
        <taxon>Saccharinae</taxon>
        <taxon>Saccharum</taxon>
    </lineage>
</organism>
<geneLocation type="chloroplast"/>
<sequence>MKLNLYVLTPKRIIWDCEVKEIILSTNSGQIGVLPNHAPINTAVDMGPLRIRLLNDQWLTAVLWSGFARIVNNEIIILGNDAELGSDIDPEEAQQALEIAEANLSKAEGTKELVEAKLALRRARIRVEAVNWIPPSN</sequence>
<protein>
    <recommendedName>
        <fullName evidence="1">ATP synthase epsilon chain, chloroplastic</fullName>
    </recommendedName>
    <alternativeName>
        <fullName evidence="1">ATP synthase F1 sector epsilon subunit</fullName>
    </alternativeName>
    <alternativeName>
        <fullName evidence="1">F-ATPase epsilon subunit</fullName>
    </alternativeName>
</protein>
<reference key="1">
    <citation type="journal article" date="2004" name="Curr. Genet.">
        <title>Structural features and transcript-editing analysis of sugarcane (Saccharum officinarum L.) chloroplast genome.</title>
        <authorList>
            <person name="Calsa T. Jr."/>
            <person name="Carraro D.M."/>
            <person name="Benatti M.R."/>
            <person name="Barbosa A.C."/>
            <person name="Kitajima J.P."/>
            <person name="Carrer H."/>
        </authorList>
    </citation>
    <scope>NUCLEOTIDE SEQUENCE [LARGE SCALE GENOMIC DNA]</scope>
    <source>
        <strain>cv. SP-80-3280</strain>
    </source>
</reference>
<dbReference type="EMBL" id="AE009947">
    <property type="protein sequence ID" value="AAT44699.1"/>
    <property type="molecule type" value="Genomic_DNA"/>
</dbReference>
<dbReference type="SMR" id="Q6L393"/>
<dbReference type="GO" id="GO:0009535">
    <property type="term" value="C:chloroplast thylakoid membrane"/>
    <property type="evidence" value="ECO:0007669"/>
    <property type="project" value="UniProtKB-SubCell"/>
</dbReference>
<dbReference type="GO" id="GO:0045259">
    <property type="term" value="C:proton-transporting ATP synthase complex"/>
    <property type="evidence" value="ECO:0007669"/>
    <property type="project" value="UniProtKB-KW"/>
</dbReference>
<dbReference type="GO" id="GO:0005524">
    <property type="term" value="F:ATP binding"/>
    <property type="evidence" value="ECO:0007669"/>
    <property type="project" value="UniProtKB-UniRule"/>
</dbReference>
<dbReference type="GO" id="GO:0046933">
    <property type="term" value="F:proton-transporting ATP synthase activity, rotational mechanism"/>
    <property type="evidence" value="ECO:0007669"/>
    <property type="project" value="UniProtKB-UniRule"/>
</dbReference>
<dbReference type="CDD" id="cd12152">
    <property type="entry name" value="F1-ATPase_delta"/>
    <property type="match status" value="1"/>
</dbReference>
<dbReference type="FunFam" id="2.60.15.10:FF:000002">
    <property type="entry name" value="ATP synthase epsilon chain, chloroplastic"/>
    <property type="match status" value="1"/>
</dbReference>
<dbReference type="Gene3D" id="6.10.140.480">
    <property type="match status" value="1"/>
</dbReference>
<dbReference type="Gene3D" id="2.60.15.10">
    <property type="entry name" value="F0F1 ATP synthase delta/epsilon subunit, N-terminal"/>
    <property type="match status" value="1"/>
</dbReference>
<dbReference type="HAMAP" id="MF_00530">
    <property type="entry name" value="ATP_synth_epsil_bac"/>
    <property type="match status" value="1"/>
</dbReference>
<dbReference type="InterPro" id="IPR001469">
    <property type="entry name" value="ATP_synth_F1_dsu/esu"/>
</dbReference>
<dbReference type="InterPro" id="IPR020546">
    <property type="entry name" value="ATP_synth_F1_dsu/esu_N"/>
</dbReference>
<dbReference type="InterPro" id="IPR020547">
    <property type="entry name" value="ATP_synth_F1_esu_C"/>
</dbReference>
<dbReference type="InterPro" id="IPR036771">
    <property type="entry name" value="ATPsynth_dsu/esu_N"/>
</dbReference>
<dbReference type="NCBIfam" id="TIGR01216">
    <property type="entry name" value="ATP_synt_epsi"/>
    <property type="match status" value="1"/>
</dbReference>
<dbReference type="PANTHER" id="PTHR13822">
    <property type="entry name" value="ATP SYNTHASE DELTA/EPSILON CHAIN"/>
    <property type="match status" value="1"/>
</dbReference>
<dbReference type="PANTHER" id="PTHR13822:SF10">
    <property type="entry name" value="ATP SYNTHASE EPSILON CHAIN, CHLOROPLASTIC"/>
    <property type="match status" value="1"/>
</dbReference>
<dbReference type="Pfam" id="PF00401">
    <property type="entry name" value="ATP-synt_DE"/>
    <property type="match status" value="1"/>
</dbReference>
<dbReference type="Pfam" id="PF02823">
    <property type="entry name" value="ATP-synt_DE_N"/>
    <property type="match status" value="1"/>
</dbReference>
<dbReference type="SUPFAM" id="SSF51344">
    <property type="entry name" value="Epsilon subunit of F1F0-ATP synthase N-terminal domain"/>
    <property type="match status" value="1"/>
</dbReference>
<evidence type="ECO:0000255" key="1">
    <source>
        <dbReference type="HAMAP-Rule" id="MF_00530"/>
    </source>
</evidence>
<feature type="chain" id="PRO_0000188292" description="ATP synthase epsilon chain, chloroplastic">
    <location>
        <begin position="1"/>
        <end position="137"/>
    </location>
</feature>
<keyword id="KW-0066">ATP synthesis</keyword>
<keyword id="KW-0139">CF(1)</keyword>
<keyword id="KW-0150">Chloroplast</keyword>
<keyword id="KW-0375">Hydrogen ion transport</keyword>
<keyword id="KW-0406">Ion transport</keyword>
<keyword id="KW-0472">Membrane</keyword>
<keyword id="KW-0934">Plastid</keyword>
<keyword id="KW-0793">Thylakoid</keyword>
<keyword id="KW-0813">Transport</keyword>
<accession>Q6L393</accession>
<proteinExistence type="inferred from homology"/>
<gene>
    <name evidence="1" type="primary">atpE</name>
    <name type="ordered locus">PS129</name>
</gene>
<name>ATPE_SACHY</name>
<comment type="function">
    <text evidence="1">Produces ATP from ADP in the presence of a proton gradient across the membrane.</text>
</comment>
<comment type="subunit">
    <text evidence="1">F-type ATPases have 2 components, CF(1) - the catalytic core - and CF(0) - the membrane proton channel. CF(1) has five subunits: alpha(3), beta(3), gamma(1), delta(1), epsilon(1). CF(0) has three main subunits: a, b and c.</text>
</comment>
<comment type="subcellular location">
    <subcellularLocation>
        <location evidence="1">Plastid</location>
        <location evidence="1">Chloroplast thylakoid membrane</location>
        <topology evidence="1">Peripheral membrane protein</topology>
    </subcellularLocation>
</comment>
<comment type="similarity">
    <text evidence="1">Belongs to the ATPase epsilon chain family.</text>
</comment>